<comment type="subcellular location">
    <subcellularLocation>
        <location evidence="1">Cytoplasm</location>
    </subcellularLocation>
</comment>
<comment type="induction">
    <text>By cold shock.</text>
</comment>
<sequence length="70" mass="7583">MSDSNTGTVKWFNEDKGFGFLTQDNGGADVFVHFRAIASEGFKTLDEGQKVTFEVEQGPKGLQASNVIAL</sequence>
<name>CSPA_SHEVD</name>
<keyword id="KW-0010">Activator</keyword>
<keyword id="KW-0963">Cytoplasm</keyword>
<keyword id="KW-0238">DNA-binding</keyword>
<keyword id="KW-1185">Reference proteome</keyword>
<keyword id="KW-0346">Stress response</keyword>
<keyword id="KW-0804">Transcription</keyword>
<keyword id="KW-0805">Transcription regulation</keyword>
<gene>
    <name type="primary">cspA</name>
    <name type="ordered locus">SVI_2452</name>
</gene>
<dbReference type="EMBL" id="AB015429">
    <property type="protein sequence ID" value="BAA84217.1"/>
    <property type="molecule type" value="Genomic_DNA"/>
</dbReference>
<dbReference type="EMBL" id="AP011177">
    <property type="protein sequence ID" value="BAJ02423.1"/>
    <property type="molecule type" value="Genomic_DNA"/>
</dbReference>
<dbReference type="RefSeq" id="WP_013051727.1">
    <property type="nucleotide sequence ID" value="NC_014012.1"/>
</dbReference>
<dbReference type="SMR" id="Q9S1B7"/>
<dbReference type="STRING" id="637905.SVI_2452"/>
<dbReference type="KEGG" id="svo:SVI_2452"/>
<dbReference type="eggNOG" id="COG1278">
    <property type="taxonomic scope" value="Bacteria"/>
</dbReference>
<dbReference type="HOGENOM" id="CLU_117621_0_3_6"/>
<dbReference type="OrthoDB" id="9810590at2"/>
<dbReference type="Proteomes" id="UP000002350">
    <property type="component" value="Chromosome"/>
</dbReference>
<dbReference type="GO" id="GO:0005829">
    <property type="term" value="C:cytosol"/>
    <property type="evidence" value="ECO:0007669"/>
    <property type="project" value="UniProtKB-ARBA"/>
</dbReference>
<dbReference type="GO" id="GO:0003677">
    <property type="term" value="F:DNA binding"/>
    <property type="evidence" value="ECO:0007669"/>
    <property type="project" value="UniProtKB-KW"/>
</dbReference>
<dbReference type="CDD" id="cd04458">
    <property type="entry name" value="CSP_CDS"/>
    <property type="match status" value="1"/>
</dbReference>
<dbReference type="FunFam" id="2.40.50.140:FF:000006">
    <property type="entry name" value="Cold shock protein CspC"/>
    <property type="match status" value="1"/>
</dbReference>
<dbReference type="Gene3D" id="6.20.370.130">
    <property type="match status" value="1"/>
</dbReference>
<dbReference type="Gene3D" id="2.40.50.140">
    <property type="entry name" value="Nucleic acid-binding proteins"/>
    <property type="match status" value="1"/>
</dbReference>
<dbReference type="InterPro" id="IPR012156">
    <property type="entry name" value="Cold_shock_CspA"/>
</dbReference>
<dbReference type="InterPro" id="IPR050181">
    <property type="entry name" value="Cold_shock_domain"/>
</dbReference>
<dbReference type="InterPro" id="IPR011129">
    <property type="entry name" value="CSD"/>
</dbReference>
<dbReference type="InterPro" id="IPR019844">
    <property type="entry name" value="CSD_CS"/>
</dbReference>
<dbReference type="InterPro" id="IPR002059">
    <property type="entry name" value="CSP_DNA-bd"/>
</dbReference>
<dbReference type="InterPro" id="IPR012340">
    <property type="entry name" value="NA-bd_OB-fold"/>
</dbReference>
<dbReference type="PANTHER" id="PTHR11544">
    <property type="entry name" value="COLD SHOCK DOMAIN CONTAINING PROTEINS"/>
    <property type="match status" value="1"/>
</dbReference>
<dbReference type="Pfam" id="PF00313">
    <property type="entry name" value="CSD"/>
    <property type="match status" value="1"/>
</dbReference>
<dbReference type="PIRSF" id="PIRSF002599">
    <property type="entry name" value="Cold_shock_A"/>
    <property type="match status" value="1"/>
</dbReference>
<dbReference type="PRINTS" id="PR00050">
    <property type="entry name" value="COLDSHOCK"/>
</dbReference>
<dbReference type="SMART" id="SM00357">
    <property type="entry name" value="CSP"/>
    <property type="match status" value="1"/>
</dbReference>
<dbReference type="SUPFAM" id="SSF50249">
    <property type="entry name" value="Nucleic acid-binding proteins"/>
    <property type="match status" value="1"/>
</dbReference>
<dbReference type="PROSITE" id="PS00352">
    <property type="entry name" value="CSD_1"/>
    <property type="match status" value="1"/>
</dbReference>
<dbReference type="PROSITE" id="PS51857">
    <property type="entry name" value="CSD_2"/>
    <property type="match status" value="1"/>
</dbReference>
<proteinExistence type="evidence at transcript level"/>
<accession>Q9S1B7</accession>
<accession>D4ZL74</accession>
<reference key="1">
    <citation type="journal article" date="1999" name="FEMS Microbiol. Lett.">
        <title>Cloning of two cold shock genes, cspA and cspG, from the deep-sea psychrophilic bacterium Shewanella violacea strain DSS12.</title>
        <authorList>
            <person name="Fujii S."/>
            <person name="Nakasone K."/>
            <person name="Horikoshi K."/>
        </authorList>
    </citation>
    <scope>NUCLEOTIDE SEQUENCE [GENOMIC DNA]</scope>
</reference>
<reference key="2">
    <citation type="journal article" date="2010" name="Mol. Biosyst.">
        <title>Complete genome sequence and comparative analysis of Shewanella violacea, a psychrophilic and piezophilic bacterium from deep sea floor sediments.</title>
        <authorList>
            <person name="Aono E."/>
            <person name="Baba T."/>
            <person name="Ara T."/>
            <person name="Nishi T."/>
            <person name="Nakamichi T."/>
            <person name="Inamoto E."/>
            <person name="Toyonaga H."/>
            <person name="Hasegawa M."/>
            <person name="Takai Y."/>
            <person name="Okumura Y."/>
            <person name="Baba M."/>
            <person name="Tomita M."/>
            <person name="Kato C."/>
            <person name="Oshima T."/>
            <person name="Nakasone K."/>
            <person name="Mori H."/>
        </authorList>
    </citation>
    <scope>NUCLEOTIDE SEQUENCE [LARGE SCALE GENOMIC DNA]</scope>
    <source>
        <strain>JCM 10179 / CIP 106290 / LMG 19151 / DSS12</strain>
    </source>
</reference>
<organism>
    <name type="scientific">Shewanella violacea (strain JCM 10179 / CIP 106290 / LMG 19151 / DSS12)</name>
    <dbReference type="NCBI Taxonomy" id="637905"/>
    <lineage>
        <taxon>Bacteria</taxon>
        <taxon>Pseudomonadati</taxon>
        <taxon>Pseudomonadota</taxon>
        <taxon>Gammaproteobacteria</taxon>
        <taxon>Alteromonadales</taxon>
        <taxon>Shewanellaceae</taxon>
        <taxon>Shewanella</taxon>
    </lineage>
</organism>
<feature type="chain" id="PRO_0000100326" description="Cold shock-like protein CspA">
    <location>
        <begin position="1"/>
        <end position="70"/>
    </location>
</feature>
<feature type="domain" description="CSD">
    <location>
        <begin position="7"/>
        <end position="67"/>
    </location>
</feature>
<evidence type="ECO:0000250" key="1"/>
<protein>
    <recommendedName>
        <fullName>Cold shock-like protein CspA</fullName>
    </recommendedName>
</protein>